<keyword id="KW-0004">4Fe-4S</keyword>
<keyword id="KW-0408">Iron</keyword>
<keyword id="KW-0411">Iron-sulfur</keyword>
<keyword id="KW-0456">Lyase</keyword>
<keyword id="KW-0479">Metal-binding</keyword>
<keyword id="KW-1185">Reference proteome</keyword>
<keyword id="KW-0949">S-adenosyl-L-methionine</keyword>
<accession>Q31PU7</accession>
<comment type="function">
    <text evidence="1">Catalyzes the radical-mediated synthesis of 7,8-didemethyl-8-hydroxy-5-deazariboflavin from 5-amino-5-(4-hydroxybenzyl)-6-(D-ribitylimino)-5,6-dihydrouracil.</text>
</comment>
<comment type="catalytic activity">
    <reaction evidence="1">
        <text>5-amino-5-(4-hydroxybenzyl)-6-(D-ribitylimino)-5,6-dihydrouracil + S-adenosyl-L-methionine = 7,8-didemethyl-8-hydroxy-5-deazariboflavin + 5'-deoxyadenosine + L-methionine + NH4(+) + H(+)</text>
        <dbReference type="Rhea" id="RHEA:55204"/>
        <dbReference type="ChEBI" id="CHEBI:15378"/>
        <dbReference type="ChEBI" id="CHEBI:17319"/>
        <dbReference type="ChEBI" id="CHEBI:28938"/>
        <dbReference type="ChEBI" id="CHEBI:57844"/>
        <dbReference type="ChEBI" id="CHEBI:59789"/>
        <dbReference type="ChEBI" id="CHEBI:59904"/>
        <dbReference type="ChEBI" id="CHEBI:85936"/>
        <dbReference type="EC" id="4.3.1.32"/>
    </reaction>
</comment>
<comment type="cofactor">
    <cofactor evidence="1">
        <name>[4Fe-4S] cluster</name>
        <dbReference type="ChEBI" id="CHEBI:49883"/>
    </cofactor>
    <text evidence="1">Binds 1 [4Fe-4S] cluster. The cluster is coordinated with 3 cysteines and an exchangeable S-adenosyl-L-methionine.</text>
</comment>
<comment type="pathway">
    <text evidence="1">Cofactor biosynthesis; coenzyme F0 biosynthesis.</text>
</comment>
<comment type="subunit">
    <text evidence="1">Consists of two subunits, CofG and CofH.</text>
</comment>
<comment type="similarity">
    <text evidence="1">Belongs to the radical SAM superfamily. CofG family.</text>
</comment>
<sequence length="336" mass="37833">MKHFSDQTWRSPQQSAVITYSPAYTLVPTYECFNRCTYCNFRRDPGMDEWLSLSTAQQRLLTVRDRGVCEVLILSGEVHPQSPRRAAWRQRLIELAELALDMGFLPHTNAGPLNRAEMIALQNVNVSLGLMLEQLTPQLQRTVHRAAPSKDPQLRLQQLEQAGELGIPFTTGLLLGIGETSRDRLETLEAIAACHDRWGHIQEVILQPHSPGRQQAIQHPPLAPDELIDCVAIARQVLPTSIAIQVPPNLLTQPQQLADCLGAGARDLGGIVPYDEVNPDYQHHDLDELREALAQQGWQLQPRLPVYPHLVDRLPQRLQTHVAAWLNRFNSQSRSS</sequence>
<name>COFG_SYNE7</name>
<gene>
    <name evidence="1" type="primary">cofG</name>
    <name type="ordered locus">Synpcc7942_0892</name>
</gene>
<feature type="chain" id="PRO_0000291710" description="7,8-didemethyl-8-hydroxy-5-deazariboflavin synthase">
    <location>
        <begin position="1"/>
        <end position="336"/>
    </location>
</feature>
<feature type="domain" description="Radical SAM core" evidence="2">
    <location>
        <begin position="18"/>
        <end position="249"/>
    </location>
</feature>
<feature type="binding site" evidence="1">
    <location>
        <position position="32"/>
    </location>
    <ligand>
        <name>[4Fe-4S] cluster</name>
        <dbReference type="ChEBI" id="CHEBI:49883"/>
        <note>4Fe-4S-S-AdoMet</note>
    </ligand>
</feature>
<feature type="binding site" evidence="1">
    <location>
        <position position="36"/>
    </location>
    <ligand>
        <name>[4Fe-4S] cluster</name>
        <dbReference type="ChEBI" id="CHEBI:49883"/>
        <note>4Fe-4S-S-AdoMet</note>
    </ligand>
</feature>
<feature type="binding site" evidence="1">
    <location>
        <position position="39"/>
    </location>
    <ligand>
        <name>[4Fe-4S] cluster</name>
        <dbReference type="ChEBI" id="CHEBI:49883"/>
        <note>4Fe-4S-S-AdoMet</note>
    </ligand>
</feature>
<organism>
    <name type="scientific">Synechococcus elongatus (strain ATCC 33912 / PCC 7942 / FACHB-805)</name>
    <name type="common">Anacystis nidulans R2</name>
    <dbReference type="NCBI Taxonomy" id="1140"/>
    <lineage>
        <taxon>Bacteria</taxon>
        <taxon>Bacillati</taxon>
        <taxon>Cyanobacteriota</taxon>
        <taxon>Cyanophyceae</taxon>
        <taxon>Synechococcales</taxon>
        <taxon>Synechococcaceae</taxon>
        <taxon>Synechococcus</taxon>
    </lineage>
</organism>
<proteinExistence type="inferred from homology"/>
<dbReference type="EC" id="4.3.1.32" evidence="1"/>
<dbReference type="EMBL" id="CP000100">
    <property type="protein sequence ID" value="ABB56922.1"/>
    <property type="molecule type" value="Genomic_DNA"/>
</dbReference>
<dbReference type="RefSeq" id="WP_011242960.1">
    <property type="nucleotide sequence ID" value="NZ_JACJTX010000005.1"/>
</dbReference>
<dbReference type="SMR" id="Q31PU7"/>
<dbReference type="STRING" id="1140.Synpcc7942_0892"/>
<dbReference type="PaxDb" id="1140-Synpcc7942_0892"/>
<dbReference type="GeneID" id="72429741"/>
<dbReference type="KEGG" id="syf:Synpcc7942_0892"/>
<dbReference type="eggNOG" id="COG1060">
    <property type="taxonomic scope" value="Bacteria"/>
</dbReference>
<dbReference type="HOGENOM" id="CLU_054174_0_0_3"/>
<dbReference type="OrthoDB" id="9802027at2"/>
<dbReference type="BioCyc" id="SYNEL:SYNPCC7942_0892-MONOMER"/>
<dbReference type="UniPathway" id="UPA00072"/>
<dbReference type="Proteomes" id="UP000889800">
    <property type="component" value="Chromosome"/>
</dbReference>
<dbReference type="GO" id="GO:0051539">
    <property type="term" value="F:4 iron, 4 sulfur cluster binding"/>
    <property type="evidence" value="ECO:0007669"/>
    <property type="project" value="UniProtKB-KW"/>
</dbReference>
<dbReference type="GO" id="GO:0044689">
    <property type="term" value="F:7,8-didemethyl-8-hydroxy-5-deazariboflavin synthase activity"/>
    <property type="evidence" value="ECO:0007669"/>
    <property type="project" value="UniProtKB-EC"/>
</dbReference>
<dbReference type="GO" id="GO:0005506">
    <property type="term" value="F:iron ion binding"/>
    <property type="evidence" value="ECO:0007669"/>
    <property type="project" value="UniProtKB-UniRule"/>
</dbReference>
<dbReference type="GO" id="GO:0016765">
    <property type="term" value="F:transferase activity, transferring alkyl or aryl (other than methyl) groups"/>
    <property type="evidence" value="ECO:0007669"/>
    <property type="project" value="InterPro"/>
</dbReference>
<dbReference type="CDD" id="cd01335">
    <property type="entry name" value="Radical_SAM"/>
    <property type="match status" value="1"/>
</dbReference>
<dbReference type="Gene3D" id="3.20.20.70">
    <property type="entry name" value="Aldolase class I"/>
    <property type="match status" value="1"/>
</dbReference>
<dbReference type="HAMAP" id="MF_01611">
    <property type="entry name" value="FO_synth_sub1"/>
    <property type="match status" value="1"/>
</dbReference>
<dbReference type="InterPro" id="IPR013785">
    <property type="entry name" value="Aldolase_TIM"/>
</dbReference>
<dbReference type="InterPro" id="IPR019939">
    <property type="entry name" value="CofG_family"/>
</dbReference>
<dbReference type="InterPro" id="IPR006638">
    <property type="entry name" value="Elp3/MiaA/NifB-like_rSAM"/>
</dbReference>
<dbReference type="InterPro" id="IPR034405">
    <property type="entry name" value="F420"/>
</dbReference>
<dbReference type="InterPro" id="IPR007197">
    <property type="entry name" value="rSAM"/>
</dbReference>
<dbReference type="NCBIfam" id="TIGR03550">
    <property type="entry name" value="F420_cofG"/>
    <property type="match status" value="1"/>
</dbReference>
<dbReference type="NCBIfam" id="NF004884">
    <property type="entry name" value="PRK06245.1"/>
    <property type="match status" value="1"/>
</dbReference>
<dbReference type="PANTHER" id="PTHR43076:SF15">
    <property type="entry name" value="7,8-DIDEMETHYL-8-HYDROXY-5-DEAZARIBOFLAVIN SYNTHASE"/>
    <property type="match status" value="1"/>
</dbReference>
<dbReference type="PANTHER" id="PTHR43076">
    <property type="entry name" value="FO SYNTHASE (COFH)"/>
    <property type="match status" value="1"/>
</dbReference>
<dbReference type="Pfam" id="PF04055">
    <property type="entry name" value="Radical_SAM"/>
    <property type="match status" value="1"/>
</dbReference>
<dbReference type="SFLD" id="SFLDF00294">
    <property type="entry name" value="7_8-didemethyl-8-hydroxy-5-dea"/>
    <property type="match status" value="1"/>
</dbReference>
<dbReference type="SFLD" id="SFLDG01388">
    <property type="entry name" value="7_8-didemethyl-8-hydroxy-5-dea"/>
    <property type="match status" value="1"/>
</dbReference>
<dbReference type="SMART" id="SM00729">
    <property type="entry name" value="Elp3"/>
    <property type="match status" value="1"/>
</dbReference>
<dbReference type="SUPFAM" id="SSF102114">
    <property type="entry name" value="Radical SAM enzymes"/>
    <property type="match status" value="1"/>
</dbReference>
<dbReference type="PROSITE" id="PS51918">
    <property type="entry name" value="RADICAL_SAM"/>
    <property type="match status" value="1"/>
</dbReference>
<protein>
    <recommendedName>
        <fullName evidence="1">7,8-didemethyl-8-hydroxy-5-deazariboflavin synthase</fullName>
        <ecNumber evidence="1">4.3.1.32</ecNumber>
    </recommendedName>
    <alternativeName>
        <fullName evidence="1">FO synthase subunit 1</fullName>
    </alternativeName>
</protein>
<evidence type="ECO:0000255" key="1">
    <source>
        <dbReference type="HAMAP-Rule" id="MF_01611"/>
    </source>
</evidence>
<evidence type="ECO:0000255" key="2">
    <source>
        <dbReference type="PROSITE-ProRule" id="PRU01266"/>
    </source>
</evidence>
<reference key="1">
    <citation type="submission" date="2005-08" db="EMBL/GenBank/DDBJ databases">
        <title>Complete sequence of chromosome 1 of Synechococcus elongatus PCC 7942.</title>
        <authorList>
            <consortium name="US DOE Joint Genome Institute"/>
            <person name="Copeland A."/>
            <person name="Lucas S."/>
            <person name="Lapidus A."/>
            <person name="Barry K."/>
            <person name="Detter J.C."/>
            <person name="Glavina T."/>
            <person name="Hammon N."/>
            <person name="Israni S."/>
            <person name="Pitluck S."/>
            <person name="Schmutz J."/>
            <person name="Larimer F."/>
            <person name="Land M."/>
            <person name="Kyrpides N."/>
            <person name="Lykidis A."/>
            <person name="Golden S."/>
            <person name="Richardson P."/>
        </authorList>
    </citation>
    <scope>NUCLEOTIDE SEQUENCE [LARGE SCALE GENOMIC DNA]</scope>
    <source>
        <strain>ATCC 33912 / PCC 7942 / FACHB-805</strain>
    </source>
</reference>